<proteinExistence type="inferred from homology"/>
<protein>
    <recommendedName>
        <fullName evidence="1">Multidrug resistance protein MdtA</fullName>
    </recommendedName>
    <alternativeName>
        <fullName evidence="1">Multidrug transporter MdtA</fullName>
    </alternativeName>
</protein>
<evidence type="ECO:0000255" key="1">
    <source>
        <dbReference type="HAMAP-Rule" id="MF_01422"/>
    </source>
</evidence>
<evidence type="ECO:0000256" key="2">
    <source>
        <dbReference type="SAM" id="MobiDB-lite"/>
    </source>
</evidence>
<gene>
    <name evidence="1" type="primary">mdtA</name>
    <name type="ordered locus">STM2126</name>
</gene>
<dbReference type="EMBL" id="AE006468">
    <property type="protein sequence ID" value="AAL21030.1"/>
    <property type="molecule type" value="Genomic_DNA"/>
</dbReference>
<dbReference type="RefSeq" id="NP_461071.1">
    <property type="nucleotide sequence ID" value="NC_003197.2"/>
</dbReference>
<dbReference type="RefSeq" id="WP_000678822.1">
    <property type="nucleotide sequence ID" value="NC_003197.2"/>
</dbReference>
<dbReference type="SMR" id="Q8ZNQ3"/>
<dbReference type="STRING" id="99287.STM2126"/>
<dbReference type="PaxDb" id="99287-STM2126"/>
<dbReference type="GeneID" id="1253647"/>
<dbReference type="KEGG" id="stm:STM2126"/>
<dbReference type="PATRIC" id="fig|99287.12.peg.2251"/>
<dbReference type="HOGENOM" id="CLU_018816_2_0_6"/>
<dbReference type="OMA" id="GQLMAIH"/>
<dbReference type="PhylomeDB" id="Q8ZNQ3"/>
<dbReference type="BioCyc" id="SENT99287:STM2126-MONOMER"/>
<dbReference type="Proteomes" id="UP000001014">
    <property type="component" value="Chromosome"/>
</dbReference>
<dbReference type="GO" id="GO:1990281">
    <property type="term" value="C:efflux pump complex"/>
    <property type="evidence" value="ECO:0000314"/>
    <property type="project" value="AgBase"/>
</dbReference>
<dbReference type="GO" id="GO:0005886">
    <property type="term" value="C:plasma membrane"/>
    <property type="evidence" value="ECO:0007669"/>
    <property type="project" value="UniProtKB-SubCell"/>
</dbReference>
<dbReference type="GO" id="GO:0015562">
    <property type="term" value="F:efflux transmembrane transporter activity"/>
    <property type="evidence" value="ECO:0000314"/>
    <property type="project" value="AgBase"/>
</dbReference>
<dbReference type="FunFam" id="2.40.420.20:FF:000001">
    <property type="entry name" value="Efflux RND transporter periplasmic adaptor subunit"/>
    <property type="match status" value="1"/>
</dbReference>
<dbReference type="FunFam" id="1.10.287.470:FF:000005">
    <property type="entry name" value="Multidrug resistance protein MdtA"/>
    <property type="match status" value="1"/>
</dbReference>
<dbReference type="FunFam" id="2.40.30.170:FF:000006">
    <property type="entry name" value="Multidrug resistance protein MdtA"/>
    <property type="match status" value="1"/>
</dbReference>
<dbReference type="Gene3D" id="2.40.30.170">
    <property type="match status" value="1"/>
</dbReference>
<dbReference type="Gene3D" id="2.40.420.20">
    <property type="match status" value="1"/>
</dbReference>
<dbReference type="Gene3D" id="2.40.50.100">
    <property type="match status" value="1"/>
</dbReference>
<dbReference type="Gene3D" id="1.10.287.470">
    <property type="entry name" value="Helix hairpin bin"/>
    <property type="match status" value="1"/>
</dbReference>
<dbReference type="HAMAP" id="MF_01422">
    <property type="entry name" value="MdtA"/>
    <property type="match status" value="1"/>
</dbReference>
<dbReference type="InterPro" id="IPR032317">
    <property type="entry name" value="CusB_D23"/>
</dbReference>
<dbReference type="InterPro" id="IPR022824">
    <property type="entry name" value="Multidrug-R_MdtA"/>
</dbReference>
<dbReference type="InterPro" id="IPR006143">
    <property type="entry name" value="RND_pump_MFP"/>
</dbReference>
<dbReference type="NCBIfam" id="NF008589">
    <property type="entry name" value="PRK11556.1"/>
    <property type="match status" value="1"/>
</dbReference>
<dbReference type="NCBIfam" id="TIGR01730">
    <property type="entry name" value="RND_mfp"/>
    <property type="match status" value="1"/>
</dbReference>
<dbReference type="PANTHER" id="PTHR30469">
    <property type="entry name" value="MULTIDRUG RESISTANCE PROTEIN MDTA"/>
    <property type="match status" value="1"/>
</dbReference>
<dbReference type="PANTHER" id="PTHR30469:SF12">
    <property type="entry name" value="MULTIDRUG RESISTANCE PROTEIN MDTA"/>
    <property type="match status" value="1"/>
</dbReference>
<dbReference type="Pfam" id="PF16576">
    <property type="entry name" value="HlyD_D23"/>
    <property type="match status" value="1"/>
</dbReference>
<dbReference type="SUPFAM" id="SSF111369">
    <property type="entry name" value="HlyD-like secretion proteins"/>
    <property type="match status" value="1"/>
</dbReference>
<accession>Q8ZNQ3</accession>
<reference key="1">
    <citation type="journal article" date="2001" name="Nature">
        <title>Complete genome sequence of Salmonella enterica serovar Typhimurium LT2.</title>
        <authorList>
            <person name="McClelland M."/>
            <person name="Sanderson K.E."/>
            <person name="Spieth J."/>
            <person name="Clifton S.W."/>
            <person name="Latreille P."/>
            <person name="Courtney L."/>
            <person name="Porwollik S."/>
            <person name="Ali J."/>
            <person name="Dante M."/>
            <person name="Du F."/>
            <person name="Hou S."/>
            <person name="Layman D."/>
            <person name="Leonard S."/>
            <person name="Nguyen C."/>
            <person name="Scott K."/>
            <person name="Holmes A."/>
            <person name="Grewal N."/>
            <person name="Mulvaney E."/>
            <person name="Ryan E."/>
            <person name="Sun H."/>
            <person name="Florea L."/>
            <person name="Miller W."/>
            <person name="Stoneking T."/>
            <person name="Nhan M."/>
            <person name="Waterston R."/>
            <person name="Wilson R.K."/>
        </authorList>
    </citation>
    <scope>NUCLEOTIDE SEQUENCE [LARGE SCALE GENOMIC DNA]</scope>
    <source>
        <strain>LT2 / SGSC1412 / ATCC 700720</strain>
    </source>
</reference>
<feature type="signal peptide" evidence="1">
    <location>
        <begin position="1"/>
        <end position="20"/>
    </location>
</feature>
<feature type="chain" id="PRO_0000018705" description="Multidrug resistance protein MdtA">
    <location>
        <begin position="21"/>
        <end position="413"/>
    </location>
</feature>
<feature type="region of interest" description="Disordered" evidence="2">
    <location>
        <begin position="31"/>
        <end position="57"/>
    </location>
</feature>
<feature type="region of interest" description="Disordered" evidence="2">
    <location>
        <begin position="391"/>
        <end position="413"/>
    </location>
</feature>
<feature type="compositionally biased region" description="Basic and acidic residues" evidence="2">
    <location>
        <begin position="397"/>
        <end position="413"/>
    </location>
</feature>
<sequence length="413" mass="44051">MKGSNTFRWAIAIGVVVAAAAFWFWHSRSESPTAAPGVAAQAPHTASAGRRGMRDGPLAPVQAATATTQAVPRYLSGLGTVTAANTVTVRSRVDGQLIALHFQEGQQVNAGDLLAQIDPSQFKVALAQAQGQLAKDNATLANARRDLARYQQLAKTNLVSRQELDAQQALVNETQGTIKADEANVASAQLQLDWSRITAPVSGRVGLKQVDVGNQISSSDTAGIVVITQTHPIDLIFTLPESDIATVVQAQKAGKALVVEAWDRTNSHKLSEGVLLSLDNQIDPTTGTIKIKARFTNQDDTLFPNQFVNARMLVDTEQNAVVVPAAAVQMGNEGHFVWVLNDENNVSKKRVKIGIQDNRNVVISAGLSAGDRVVTDGIDRLTEGAKVEVVEPQTTVADEKSPSRHEGQKGARA</sequence>
<name>MDTA_SALTY</name>
<organism>
    <name type="scientific">Salmonella typhimurium (strain LT2 / SGSC1412 / ATCC 700720)</name>
    <dbReference type="NCBI Taxonomy" id="99287"/>
    <lineage>
        <taxon>Bacteria</taxon>
        <taxon>Pseudomonadati</taxon>
        <taxon>Pseudomonadota</taxon>
        <taxon>Gammaproteobacteria</taxon>
        <taxon>Enterobacterales</taxon>
        <taxon>Enterobacteriaceae</taxon>
        <taxon>Salmonella</taxon>
    </lineage>
</organism>
<keyword id="KW-0997">Cell inner membrane</keyword>
<keyword id="KW-1003">Cell membrane</keyword>
<keyword id="KW-0472">Membrane</keyword>
<keyword id="KW-1185">Reference proteome</keyword>
<keyword id="KW-0732">Signal</keyword>
<keyword id="KW-0813">Transport</keyword>
<comment type="subunit">
    <text evidence="1">Part of a tripartite efflux system composed of MdtA, MdtB and MdtC.</text>
</comment>
<comment type="subcellular location">
    <subcellularLocation>
        <location evidence="1">Cell inner membrane</location>
        <topology evidence="1">Peripheral membrane protein</topology>
    </subcellularLocation>
</comment>
<comment type="similarity">
    <text evidence="1">Belongs to the membrane fusion protein (MFP) (TC 8.A.1) family.</text>
</comment>